<evidence type="ECO:0000255" key="1">
    <source>
        <dbReference type="HAMAP-Rule" id="MF_01307"/>
    </source>
</evidence>
<evidence type="ECO:0000305" key="2"/>
<reference key="1">
    <citation type="journal article" date="2004" name="J. Bacteriol.">
        <title>Complete genome sequence of Rickettsia typhi and comparison with sequences of other Rickettsiae.</title>
        <authorList>
            <person name="McLeod M.P."/>
            <person name="Qin X."/>
            <person name="Karpathy S.E."/>
            <person name="Gioia J."/>
            <person name="Highlander S.K."/>
            <person name="Fox G.E."/>
            <person name="McNeill T.Z."/>
            <person name="Jiang H."/>
            <person name="Muzny D."/>
            <person name="Jacob L.S."/>
            <person name="Hawes A.C."/>
            <person name="Sodergren E."/>
            <person name="Gill R."/>
            <person name="Hume J."/>
            <person name="Morgan M."/>
            <person name="Fan G."/>
            <person name="Amin A.G."/>
            <person name="Gibbs R.A."/>
            <person name="Hong C."/>
            <person name="Yu X.-J."/>
            <person name="Walker D.H."/>
            <person name="Weinstock G.M."/>
        </authorList>
    </citation>
    <scope>NUCLEOTIDE SEQUENCE [LARGE SCALE GENOMIC DNA]</scope>
    <source>
        <strain>ATCC VR-144 / Wilmington</strain>
    </source>
</reference>
<gene>
    <name evidence="1" type="primary">rpsE</name>
    <name type="ordered locus">RT0634</name>
</gene>
<proteinExistence type="inferred from homology"/>
<feature type="chain" id="PRO_0000131585" description="Small ribosomal subunit protein uS5">
    <location>
        <begin position="1"/>
        <end position="175"/>
    </location>
</feature>
<feature type="domain" description="S5 DRBM" evidence="1">
    <location>
        <begin position="11"/>
        <end position="74"/>
    </location>
</feature>
<organism>
    <name type="scientific">Rickettsia typhi (strain ATCC VR-144 / Wilmington)</name>
    <dbReference type="NCBI Taxonomy" id="257363"/>
    <lineage>
        <taxon>Bacteria</taxon>
        <taxon>Pseudomonadati</taxon>
        <taxon>Pseudomonadota</taxon>
        <taxon>Alphaproteobacteria</taxon>
        <taxon>Rickettsiales</taxon>
        <taxon>Rickettsiaceae</taxon>
        <taxon>Rickettsieae</taxon>
        <taxon>Rickettsia</taxon>
        <taxon>typhus group</taxon>
    </lineage>
</organism>
<dbReference type="EMBL" id="AE017197">
    <property type="protein sequence ID" value="AAU04097.1"/>
    <property type="molecule type" value="Genomic_DNA"/>
</dbReference>
<dbReference type="RefSeq" id="WP_011191076.1">
    <property type="nucleotide sequence ID" value="NC_006142.1"/>
</dbReference>
<dbReference type="SMR" id="Q68W95"/>
<dbReference type="KEGG" id="rty:RT0634"/>
<dbReference type="eggNOG" id="COG0098">
    <property type="taxonomic scope" value="Bacteria"/>
</dbReference>
<dbReference type="HOGENOM" id="CLU_065898_2_2_5"/>
<dbReference type="OrthoDB" id="9809045at2"/>
<dbReference type="Proteomes" id="UP000000604">
    <property type="component" value="Chromosome"/>
</dbReference>
<dbReference type="GO" id="GO:0015935">
    <property type="term" value="C:small ribosomal subunit"/>
    <property type="evidence" value="ECO:0007669"/>
    <property type="project" value="InterPro"/>
</dbReference>
<dbReference type="GO" id="GO:0019843">
    <property type="term" value="F:rRNA binding"/>
    <property type="evidence" value="ECO:0007669"/>
    <property type="project" value="UniProtKB-UniRule"/>
</dbReference>
<dbReference type="GO" id="GO:0003735">
    <property type="term" value="F:structural constituent of ribosome"/>
    <property type="evidence" value="ECO:0007669"/>
    <property type="project" value="InterPro"/>
</dbReference>
<dbReference type="GO" id="GO:0006412">
    <property type="term" value="P:translation"/>
    <property type="evidence" value="ECO:0007669"/>
    <property type="project" value="UniProtKB-UniRule"/>
</dbReference>
<dbReference type="FunFam" id="3.30.230.10:FF:000002">
    <property type="entry name" value="30S ribosomal protein S5"/>
    <property type="match status" value="1"/>
</dbReference>
<dbReference type="Gene3D" id="3.30.160.20">
    <property type="match status" value="1"/>
</dbReference>
<dbReference type="Gene3D" id="3.30.230.10">
    <property type="match status" value="1"/>
</dbReference>
<dbReference type="HAMAP" id="MF_01307_B">
    <property type="entry name" value="Ribosomal_uS5_B"/>
    <property type="match status" value="1"/>
</dbReference>
<dbReference type="InterPro" id="IPR020568">
    <property type="entry name" value="Ribosomal_Su5_D2-typ_SF"/>
</dbReference>
<dbReference type="InterPro" id="IPR000851">
    <property type="entry name" value="Ribosomal_uS5"/>
</dbReference>
<dbReference type="InterPro" id="IPR005712">
    <property type="entry name" value="Ribosomal_uS5_bac-type"/>
</dbReference>
<dbReference type="InterPro" id="IPR005324">
    <property type="entry name" value="Ribosomal_uS5_C"/>
</dbReference>
<dbReference type="InterPro" id="IPR013810">
    <property type="entry name" value="Ribosomal_uS5_N"/>
</dbReference>
<dbReference type="InterPro" id="IPR018192">
    <property type="entry name" value="Ribosomal_uS5_N_CS"/>
</dbReference>
<dbReference type="InterPro" id="IPR014721">
    <property type="entry name" value="Ribsml_uS5_D2-typ_fold_subgr"/>
</dbReference>
<dbReference type="NCBIfam" id="TIGR01021">
    <property type="entry name" value="rpsE_bact"/>
    <property type="match status" value="1"/>
</dbReference>
<dbReference type="PANTHER" id="PTHR48277">
    <property type="entry name" value="MITOCHONDRIAL RIBOSOMAL PROTEIN S5"/>
    <property type="match status" value="1"/>
</dbReference>
<dbReference type="PANTHER" id="PTHR48277:SF1">
    <property type="entry name" value="MITOCHONDRIAL RIBOSOMAL PROTEIN S5"/>
    <property type="match status" value="1"/>
</dbReference>
<dbReference type="Pfam" id="PF00333">
    <property type="entry name" value="Ribosomal_S5"/>
    <property type="match status" value="1"/>
</dbReference>
<dbReference type="Pfam" id="PF03719">
    <property type="entry name" value="Ribosomal_S5_C"/>
    <property type="match status" value="1"/>
</dbReference>
<dbReference type="SUPFAM" id="SSF54768">
    <property type="entry name" value="dsRNA-binding domain-like"/>
    <property type="match status" value="1"/>
</dbReference>
<dbReference type="SUPFAM" id="SSF54211">
    <property type="entry name" value="Ribosomal protein S5 domain 2-like"/>
    <property type="match status" value="1"/>
</dbReference>
<dbReference type="PROSITE" id="PS00585">
    <property type="entry name" value="RIBOSOMAL_S5"/>
    <property type="match status" value="1"/>
</dbReference>
<dbReference type="PROSITE" id="PS50881">
    <property type="entry name" value="S5_DSRBD"/>
    <property type="match status" value="1"/>
</dbReference>
<name>RS5_RICTY</name>
<accession>Q68W95</accession>
<keyword id="KW-0687">Ribonucleoprotein</keyword>
<keyword id="KW-0689">Ribosomal protein</keyword>
<keyword id="KW-0694">RNA-binding</keyword>
<keyword id="KW-0699">rRNA-binding</keyword>
<protein>
    <recommendedName>
        <fullName evidence="1">Small ribosomal subunit protein uS5</fullName>
    </recommendedName>
    <alternativeName>
        <fullName evidence="2">30S ribosomal protein S5</fullName>
    </alternativeName>
</protein>
<sequence length="175" mass="18754">MSKVKKNEEALSEVLVDVNRVTKVVKGGRRFAFSAYVVVGDKAGRVGAGHGKAKEVNEARGKAKQAAKKRMMKVPLYQNRTIHHDVVGKSGAAKVILRRAKAGTGVIAGGSMRAIFDSLGVHDIVAKSIGSTNVYAMISATFDALNKLASPKSIAIRRGKKVHEISVKSYIQVNK</sequence>
<comment type="function">
    <text evidence="1">With S4 and S12 plays an important role in translational accuracy.</text>
</comment>
<comment type="function">
    <text evidence="1">Located at the back of the 30S subunit body where it stabilizes the conformation of the head with respect to the body.</text>
</comment>
<comment type="subunit">
    <text evidence="1">Part of the 30S ribosomal subunit. Contacts proteins S4 and S8.</text>
</comment>
<comment type="domain">
    <text>The N-terminal domain interacts with the head of the 30S subunit; the C-terminal domain interacts with the body and contacts protein S4. The interaction surface between S4 and S5 is involved in control of translational fidelity.</text>
</comment>
<comment type="similarity">
    <text evidence="1">Belongs to the universal ribosomal protein uS5 family.</text>
</comment>